<protein>
    <recommendedName>
        <fullName evidence="1">Ribose-5-phosphate isomerase A</fullName>
        <ecNumber evidence="1">5.3.1.6</ecNumber>
    </recommendedName>
    <alternativeName>
        <fullName evidence="1">Phosphoriboisomerase A</fullName>
        <shortName evidence="1">PRI</shortName>
    </alternativeName>
</protein>
<keyword id="KW-0413">Isomerase</keyword>
<gene>
    <name evidence="1" type="primary">rpiA</name>
    <name type="ordered locus">YPTS_3322</name>
</gene>
<reference key="1">
    <citation type="submission" date="2008-04" db="EMBL/GenBank/DDBJ databases">
        <title>Complete sequence of Yersinia pseudotuberculosis PB1/+.</title>
        <authorList>
            <person name="Copeland A."/>
            <person name="Lucas S."/>
            <person name="Lapidus A."/>
            <person name="Glavina del Rio T."/>
            <person name="Dalin E."/>
            <person name="Tice H."/>
            <person name="Bruce D."/>
            <person name="Goodwin L."/>
            <person name="Pitluck S."/>
            <person name="Munk A.C."/>
            <person name="Brettin T."/>
            <person name="Detter J.C."/>
            <person name="Han C."/>
            <person name="Tapia R."/>
            <person name="Schmutz J."/>
            <person name="Larimer F."/>
            <person name="Land M."/>
            <person name="Hauser L."/>
            <person name="Challacombe J.F."/>
            <person name="Green L."/>
            <person name="Lindler L.E."/>
            <person name="Nikolich M.P."/>
            <person name="Richardson P."/>
        </authorList>
    </citation>
    <scope>NUCLEOTIDE SEQUENCE [LARGE SCALE GENOMIC DNA]</scope>
    <source>
        <strain>PB1/+</strain>
    </source>
</reference>
<accession>B2K0R4</accession>
<name>RPIA_YERPB</name>
<evidence type="ECO:0000255" key="1">
    <source>
        <dbReference type="HAMAP-Rule" id="MF_00170"/>
    </source>
</evidence>
<dbReference type="EC" id="5.3.1.6" evidence="1"/>
<dbReference type="EMBL" id="CP001048">
    <property type="protein sequence ID" value="ACC90277.1"/>
    <property type="molecule type" value="Genomic_DNA"/>
</dbReference>
<dbReference type="RefSeq" id="WP_002209957.1">
    <property type="nucleotide sequence ID" value="NZ_CP009780.1"/>
</dbReference>
<dbReference type="SMR" id="B2K0R4"/>
<dbReference type="GeneID" id="57973725"/>
<dbReference type="KEGG" id="ypb:YPTS_3322"/>
<dbReference type="PATRIC" id="fig|502801.10.peg.2762"/>
<dbReference type="UniPathway" id="UPA00115">
    <property type="reaction ID" value="UER00412"/>
</dbReference>
<dbReference type="GO" id="GO:0005829">
    <property type="term" value="C:cytosol"/>
    <property type="evidence" value="ECO:0007669"/>
    <property type="project" value="TreeGrafter"/>
</dbReference>
<dbReference type="GO" id="GO:0004751">
    <property type="term" value="F:ribose-5-phosphate isomerase activity"/>
    <property type="evidence" value="ECO:0007669"/>
    <property type="project" value="UniProtKB-UniRule"/>
</dbReference>
<dbReference type="GO" id="GO:0006014">
    <property type="term" value="P:D-ribose metabolic process"/>
    <property type="evidence" value="ECO:0007669"/>
    <property type="project" value="TreeGrafter"/>
</dbReference>
<dbReference type="GO" id="GO:0009052">
    <property type="term" value="P:pentose-phosphate shunt, non-oxidative branch"/>
    <property type="evidence" value="ECO:0007669"/>
    <property type="project" value="UniProtKB-UniRule"/>
</dbReference>
<dbReference type="CDD" id="cd01398">
    <property type="entry name" value="RPI_A"/>
    <property type="match status" value="1"/>
</dbReference>
<dbReference type="FunFam" id="3.30.70.260:FF:000004">
    <property type="entry name" value="Ribose-5-phosphate isomerase A"/>
    <property type="match status" value="1"/>
</dbReference>
<dbReference type="FunFam" id="3.40.50.1360:FF:000001">
    <property type="entry name" value="Ribose-5-phosphate isomerase A"/>
    <property type="match status" value="1"/>
</dbReference>
<dbReference type="Gene3D" id="3.30.70.260">
    <property type="match status" value="1"/>
</dbReference>
<dbReference type="Gene3D" id="3.40.50.1360">
    <property type="match status" value="1"/>
</dbReference>
<dbReference type="HAMAP" id="MF_00170">
    <property type="entry name" value="Rib_5P_isom_A"/>
    <property type="match status" value="1"/>
</dbReference>
<dbReference type="InterPro" id="IPR037171">
    <property type="entry name" value="NagB/RpiA_transferase-like"/>
</dbReference>
<dbReference type="InterPro" id="IPR020672">
    <property type="entry name" value="Ribose5P_isomerase_typA_subgr"/>
</dbReference>
<dbReference type="InterPro" id="IPR004788">
    <property type="entry name" value="Ribose5P_isomerase_type_A"/>
</dbReference>
<dbReference type="NCBIfam" id="NF001924">
    <property type="entry name" value="PRK00702.1"/>
    <property type="match status" value="1"/>
</dbReference>
<dbReference type="NCBIfam" id="TIGR00021">
    <property type="entry name" value="rpiA"/>
    <property type="match status" value="1"/>
</dbReference>
<dbReference type="PANTHER" id="PTHR11934">
    <property type="entry name" value="RIBOSE-5-PHOSPHATE ISOMERASE"/>
    <property type="match status" value="1"/>
</dbReference>
<dbReference type="PANTHER" id="PTHR11934:SF0">
    <property type="entry name" value="RIBOSE-5-PHOSPHATE ISOMERASE"/>
    <property type="match status" value="1"/>
</dbReference>
<dbReference type="Pfam" id="PF06026">
    <property type="entry name" value="Rib_5-P_isom_A"/>
    <property type="match status" value="1"/>
</dbReference>
<dbReference type="SUPFAM" id="SSF75445">
    <property type="entry name" value="D-ribose-5-phosphate isomerase (RpiA), lid domain"/>
    <property type="match status" value="1"/>
</dbReference>
<dbReference type="SUPFAM" id="SSF100950">
    <property type="entry name" value="NagB/RpiA/CoA transferase-like"/>
    <property type="match status" value="1"/>
</dbReference>
<feature type="chain" id="PRO_1000097708" description="Ribose-5-phosphate isomerase A">
    <location>
        <begin position="1"/>
        <end position="218"/>
    </location>
</feature>
<feature type="active site" description="Proton acceptor" evidence="1">
    <location>
        <position position="103"/>
    </location>
</feature>
<feature type="binding site" evidence="1">
    <location>
        <begin position="28"/>
        <end position="31"/>
    </location>
    <ligand>
        <name>substrate</name>
    </ligand>
</feature>
<feature type="binding site" evidence="1">
    <location>
        <begin position="81"/>
        <end position="84"/>
    </location>
    <ligand>
        <name>substrate</name>
    </ligand>
</feature>
<feature type="binding site" evidence="1">
    <location>
        <begin position="94"/>
        <end position="97"/>
    </location>
    <ligand>
        <name>substrate</name>
    </ligand>
</feature>
<feature type="binding site" evidence="1">
    <location>
        <position position="121"/>
    </location>
    <ligand>
        <name>substrate</name>
    </ligand>
</feature>
<organism>
    <name type="scientific">Yersinia pseudotuberculosis serotype IB (strain PB1/+)</name>
    <dbReference type="NCBI Taxonomy" id="502801"/>
    <lineage>
        <taxon>Bacteria</taxon>
        <taxon>Pseudomonadati</taxon>
        <taxon>Pseudomonadota</taxon>
        <taxon>Gammaproteobacteria</taxon>
        <taxon>Enterobacterales</taxon>
        <taxon>Yersiniaceae</taxon>
        <taxon>Yersinia</taxon>
    </lineage>
</organism>
<comment type="function">
    <text evidence="1">Catalyzes the reversible conversion of ribose-5-phosphate to ribulose 5-phosphate.</text>
</comment>
<comment type="catalytic activity">
    <reaction evidence="1">
        <text>aldehydo-D-ribose 5-phosphate = D-ribulose 5-phosphate</text>
        <dbReference type="Rhea" id="RHEA:14657"/>
        <dbReference type="ChEBI" id="CHEBI:58121"/>
        <dbReference type="ChEBI" id="CHEBI:58273"/>
        <dbReference type="EC" id="5.3.1.6"/>
    </reaction>
</comment>
<comment type="pathway">
    <text evidence="1">Carbohydrate degradation; pentose phosphate pathway; D-ribose 5-phosphate from D-ribulose 5-phosphate (non-oxidative stage): step 1/1.</text>
</comment>
<comment type="subunit">
    <text evidence="1">Homodimer.</text>
</comment>
<comment type="similarity">
    <text evidence="1">Belongs to the ribose 5-phosphate isomerase family.</text>
</comment>
<proteinExistence type="inferred from homology"/>
<sequence length="218" mass="22801">MTQDELKKAVGWAALDYVKPGTIVGVGTGSTAAHFIDALGSIKHQIEGAVSSSDASTAKLKSYGIPVFDCNDVDVLDIYVDGADEINGQMQMIKGGGAALTREKIIAAIARKFICIADESKQVGVLGKFPLPVEVIPMARSYVARELIKLGGLPEYRQNVLTDNGNVILDVHNLSILDAIALENQINGIAGVVTVGLFANRGADVALIGTANGVKVIG</sequence>